<gene>
    <name evidence="1" type="primary">bchL</name>
    <name type="ordered locus">RPE_1350</name>
</gene>
<name>BCHL_RHOP5</name>
<organism>
    <name type="scientific">Rhodopseudomonas palustris (strain BisA53)</name>
    <dbReference type="NCBI Taxonomy" id="316055"/>
    <lineage>
        <taxon>Bacteria</taxon>
        <taxon>Pseudomonadati</taxon>
        <taxon>Pseudomonadota</taxon>
        <taxon>Alphaproteobacteria</taxon>
        <taxon>Hyphomicrobiales</taxon>
        <taxon>Nitrobacteraceae</taxon>
        <taxon>Rhodopseudomonas</taxon>
    </lineage>
</organism>
<protein>
    <recommendedName>
        <fullName evidence="1">Light-independent protochlorophyllide reductase iron-sulfur ATP-binding protein</fullName>
        <shortName evidence="1">DPOR subunit L</shortName>
        <shortName evidence="1">LI-POR subunit L</shortName>
        <ecNumber evidence="1">1.3.7.7</ecNumber>
    </recommendedName>
</protein>
<keyword id="KW-0004">4Fe-4S</keyword>
<keyword id="KW-0067">ATP-binding</keyword>
<keyword id="KW-0077">Bacteriochlorophyll biosynthesis</keyword>
<keyword id="KW-0149">Chlorophyll biosynthesis</keyword>
<keyword id="KW-0408">Iron</keyword>
<keyword id="KW-0411">Iron-sulfur</keyword>
<keyword id="KW-0460">Magnesium</keyword>
<keyword id="KW-0479">Metal-binding</keyword>
<keyword id="KW-0547">Nucleotide-binding</keyword>
<keyword id="KW-0560">Oxidoreductase</keyword>
<keyword id="KW-0602">Photosynthesis</keyword>
<comment type="function">
    <text evidence="1">Component of the dark-operative protochlorophyllide reductase (DPOR) that uses Mg-ATP and reduced ferredoxin to reduce ring D of protochlorophyllide (Pchlide) to form chlorophyllide a (Chlide). This reaction is light-independent. The L component serves as a unique electron donor to the NB-component of the complex, and binds Mg-ATP.</text>
</comment>
<comment type="catalytic activity">
    <reaction evidence="1">
        <text>chlorophyllide a + oxidized 2[4Fe-4S]-[ferredoxin] + 2 ADP + 2 phosphate = protochlorophyllide a + reduced 2[4Fe-4S]-[ferredoxin] + 2 ATP + 2 H2O</text>
        <dbReference type="Rhea" id="RHEA:28202"/>
        <dbReference type="Rhea" id="RHEA-COMP:10002"/>
        <dbReference type="Rhea" id="RHEA-COMP:10004"/>
        <dbReference type="ChEBI" id="CHEBI:15377"/>
        <dbReference type="ChEBI" id="CHEBI:30616"/>
        <dbReference type="ChEBI" id="CHEBI:33722"/>
        <dbReference type="ChEBI" id="CHEBI:33723"/>
        <dbReference type="ChEBI" id="CHEBI:43474"/>
        <dbReference type="ChEBI" id="CHEBI:83348"/>
        <dbReference type="ChEBI" id="CHEBI:83350"/>
        <dbReference type="ChEBI" id="CHEBI:456216"/>
        <dbReference type="EC" id="1.3.7.7"/>
    </reaction>
</comment>
<comment type="cofactor">
    <cofactor evidence="1">
        <name>[4Fe-4S] cluster</name>
        <dbReference type="ChEBI" id="CHEBI:49883"/>
    </cofactor>
    <text evidence="1">Binds 1 [4Fe-4S] cluster per dimer.</text>
</comment>
<comment type="pathway">
    <text evidence="1">Porphyrin-containing compound metabolism; bacteriochlorophyll biosynthesis (light-independent).</text>
</comment>
<comment type="subunit">
    <text evidence="1">Homodimer. Protochlorophyllide reductase is composed of three subunits; BchL, BchN and BchB.</text>
</comment>
<comment type="similarity">
    <text evidence="1">Belongs to the NifH/BchL/ChlL family.</text>
</comment>
<dbReference type="EC" id="1.3.7.7" evidence="1"/>
<dbReference type="EMBL" id="CP000463">
    <property type="protein sequence ID" value="ABJ05302.1"/>
    <property type="molecule type" value="Genomic_DNA"/>
</dbReference>
<dbReference type="SMR" id="Q07RY2"/>
<dbReference type="STRING" id="316055.RPE_1350"/>
<dbReference type="KEGG" id="rpe:RPE_1350"/>
<dbReference type="eggNOG" id="COG1348">
    <property type="taxonomic scope" value="Bacteria"/>
</dbReference>
<dbReference type="HOGENOM" id="CLU_059373_2_0_5"/>
<dbReference type="OrthoDB" id="9778641at2"/>
<dbReference type="UniPathway" id="UPA00671"/>
<dbReference type="GO" id="GO:0051539">
    <property type="term" value="F:4 iron, 4 sulfur cluster binding"/>
    <property type="evidence" value="ECO:0007669"/>
    <property type="project" value="UniProtKB-UniRule"/>
</dbReference>
<dbReference type="GO" id="GO:0005524">
    <property type="term" value="F:ATP binding"/>
    <property type="evidence" value="ECO:0007669"/>
    <property type="project" value="UniProtKB-UniRule"/>
</dbReference>
<dbReference type="GO" id="GO:0046872">
    <property type="term" value="F:metal ion binding"/>
    <property type="evidence" value="ECO:0007669"/>
    <property type="project" value="UniProtKB-KW"/>
</dbReference>
<dbReference type="GO" id="GO:0016730">
    <property type="term" value="F:oxidoreductase activity, acting on iron-sulfur proteins as donors"/>
    <property type="evidence" value="ECO:0007669"/>
    <property type="project" value="InterPro"/>
</dbReference>
<dbReference type="GO" id="GO:0016636">
    <property type="term" value="F:oxidoreductase activity, acting on the CH-CH group of donors, iron-sulfur protein as acceptor"/>
    <property type="evidence" value="ECO:0007669"/>
    <property type="project" value="UniProtKB-UniRule"/>
</dbReference>
<dbReference type="GO" id="GO:0036070">
    <property type="term" value="P:light-independent bacteriochlorophyll biosynthetic process"/>
    <property type="evidence" value="ECO:0007669"/>
    <property type="project" value="UniProtKB-UniRule"/>
</dbReference>
<dbReference type="GO" id="GO:0019685">
    <property type="term" value="P:photosynthesis, dark reaction"/>
    <property type="evidence" value="ECO:0007669"/>
    <property type="project" value="InterPro"/>
</dbReference>
<dbReference type="CDD" id="cd02032">
    <property type="entry name" value="Bchl-like"/>
    <property type="match status" value="1"/>
</dbReference>
<dbReference type="Gene3D" id="3.40.50.300">
    <property type="entry name" value="P-loop containing nucleotide triphosphate hydrolases"/>
    <property type="match status" value="1"/>
</dbReference>
<dbReference type="HAMAP" id="MF_00355">
    <property type="entry name" value="ChlL_BchL"/>
    <property type="match status" value="1"/>
</dbReference>
<dbReference type="InterPro" id="IPR030655">
    <property type="entry name" value="NifH/chlL_CS"/>
</dbReference>
<dbReference type="InterPro" id="IPR000392">
    <property type="entry name" value="NifH/frxC"/>
</dbReference>
<dbReference type="InterPro" id="IPR027417">
    <property type="entry name" value="P-loop_NTPase"/>
</dbReference>
<dbReference type="InterPro" id="IPR005971">
    <property type="entry name" value="Protochlorophyllide_ATP-bd"/>
</dbReference>
<dbReference type="NCBIfam" id="TIGR01281">
    <property type="entry name" value="DPOR_bchL"/>
    <property type="match status" value="1"/>
</dbReference>
<dbReference type="PANTHER" id="PTHR42864">
    <property type="entry name" value="LIGHT-INDEPENDENT PROTOCHLOROPHYLLIDE REDUCTASE IRON-SULFUR ATP-BINDING PROTEIN"/>
    <property type="match status" value="1"/>
</dbReference>
<dbReference type="PANTHER" id="PTHR42864:SF2">
    <property type="entry name" value="LIGHT-INDEPENDENT PROTOCHLOROPHYLLIDE REDUCTASE IRON-SULFUR ATP-BINDING PROTEIN"/>
    <property type="match status" value="1"/>
</dbReference>
<dbReference type="Pfam" id="PF00142">
    <property type="entry name" value="Fer4_NifH"/>
    <property type="match status" value="1"/>
</dbReference>
<dbReference type="PIRSF" id="PIRSF000363">
    <property type="entry name" value="Nitrogenase_iron"/>
    <property type="match status" value="1"/>
</dbReference>
<dbReference type="PRINTS" id="PR00091">
    <property type="entry name" value="NITROGNASEII"/>
</dbReference>
<dbReference type="SUPFAM" id="SSF52540">
    <property type="entry name" value="P-loop containing nucleoside triphosphate hydrolases"/>
    <property type="match status" value="1"/>
</dbReference>
<dbReference type="PROSITE" id="PS00746">
    <property type="entry name" value="NIFH_FRXC_1"/>
    <property type="match status" value="1"/>
</dbReference>
<dbReference type="PROSITE" id="PS00692">
    <property type="entry name" value="NIFH_FRXC_2"/>
    <property type="match status" value="1"/>
</dbReference>
<dbReference type="PROSITE" id="PS51026">
    <property type="entry name" value="NIFH_FRXC_3"/>
    <property type="match status" value="1"/>
</dbReference>
<reference key="1">
    <citation type="submission" date="2006-09" db="EMBL/GenBank/DDBJ databases">
        <title>Complete sequence of Rhodopseudomonas palustris BisA53.</title>
        <authorList>
            <consortium name="US DOE Joint Genome Institute"/>
            <person name="Copeland A."/>
            <person name="Lucas S."/>
            <person name="Lapidus A."/>
            <person name="Barry K."/>
            <person name="Detter J.C."/>
            <person name="Glavina del Rio T."/>
            <person name="Hammon N."/>
            <person name="Israni S."/>
            <person name="Dalin E."/>
            <person name="Tice H."/>
            <person name="Pitluck S."/>
            <person name="Chain P."/>
            <person name="Malfatti S."/>
            <person name="Shin M."/>
            <person name="Vergez L."/>
            <person name="Schmutz J."/>
            <person name="Larimer F."/>
            <person name="Land M."/>
            <person name="Hauser L."/>
            <person name="Pelletier D.A."/>
            <person name="Kyrpides N."/>
            <person name="Kim E."/>
            <person name="Harwood C.S."/>
            <person name="Oda Y."/>
            <person name="Richardson P."/>
        </authorList>
    </citation>
    <scope>NUCLEOTIDE SEQUENCE [LARGE SCALE GENOMIC DNA]</scope>
    <source>
        <strain>BisA53</strain>
    </source>
</reference>
<proteinExistence type="inferred from homology"/>
<evidence type="ECO:0000255" key="1">
    <source>
        <dbReference type="HAMAP-Rule" id="MF_00355"/>
    </source>
</evidence>
<accession>Q07RY2</accession>
<feature type="chain" id="PRO_0000324069" description="Light-independent protochlorophyllide reductase iron-sulfur ATP-binding protein">
    <location>
        <begin position="1"/>
        <end position="310"/>
    </location>
</feature>
<feature type="binding site" evidence="1">
    <location>
        <begin position="53"/>
        <end position="58"/>
    </location>
    <ligand>
        <name>ATP</name>
        <dbReference type="ChEBI" id="CHEBI:30616"/>
    </ligand>
</feature>
<feature type="binding site" evidence="1">
    <location>
        <position position="57"/>
    </location>
    <ligand>
        <name>Mg(2+)</name>
        <dbReference type="ChEBI" id="CHEBI:18420"/>
    </ligand>
</feature>
<feature type="binding site" evidence="1">
    <location>
        <position position="82"/>
    </location>
    <ligand>
        <name>ATP</name>
        <dbReference type="ChEBI" id="CHEBI:30616"/>
    </ligand>
</feature>
<feature type="binding site" evidence="1">
    <location>
        <position position="138"/>
    </location>
    <ligand>
        <name>[4Fe-4S] cluster</name>
        <dbReference type="ChEBI" id="CHEBI:49883"/>
        <note>ligand shared between dimeric partners</note>
    </ligand>
</feature>
<feature type="binding site" evidence="1">
    <location>
        <position position="172"/>
    </location>
    <ligand>
        <name>[4Fe-4S] cluster</name>
        <dbReference type="ChEBI" id="CHEBI:49883"/>
        <note>ligand shared between dimeric partners</note>
    </ligand>
</feature>
<feature type="binding site" evidence="1">
    <location>
        <begin position="223"/>
        <end position="224"/>
    </location>
    <ligand>
        <name>ATP</name>
        <dbReference type="ChEBI" id="CHEBI:30616"/>
    </ligand>
</feature>
<feature type="binding site" evidence="1">
    <location>
        <begin position="247"/>
        <end position="249"/>
    </location>
    <ligand>
        <name>ATP</name>
        <dbReference type="ChEBI" id="CHEBI:30616"/>
    </ligand>
</feature>
<sequence>MNILTDPTKLQGCTDTNANKCVEGDGEGSVQVQLDPDLKIGTAKVFSIYGKGGIGKSTTSSNLSVAFSKLGKRVLQIGCDPKHDSTFTLTKCLIPTVIDVLESVNFHAEELRPEDFVFEGYNGVMCLEAGGPPAGTGCGGYVVGQTVKLLKEHHLLEDTDVVIFDVLGDVVCGGFAAPLQHSDRAMIVTANDFDSIFAANRIVAAITAKAKNYGVRVGGIIANRSDATDQIDKFSERTGVPRVAHFPALDIIRKSRLKKSTLFELDHSPELAKVQEEYMRLATELWEGKQPPCEGKALKDREIFDLLGFD</sequence>